<dbReference type="EC" id="2.1.3.15" evidence="1"/>
<dbReference type="EMBL" id="CP001616">
    <property type="protein sequence ID" value="ACQ93694.1"/>
    <property type="molecule type" value="Genomic_DNA"/>
</dbReference>
<dbReference type="RefSeq" id="WP_015879162.1">
    <property type="nucleotide sequence ID" value="NC_012691.1"/>
</dbReference>
<dbReference type="SMR" id="C4L848"/>
<dbReference type="STRING" id="595494.Tola_2095"/>
<dbReference type="KEGG" id="tau:Tola_2095"/>
<dbReference type="eggNOG" id="COG0825">
    <property type="taxonomic scope" value="Bacteria"/>
</dbReference>
<dbReference type="HOGENOM" id="CLU_015486_0_2_6"/>
<dbReference type="OrthoDB" id="9808023at2"/>
<dbReference type="UniPathway" id="UPA00655">
    <property type="reaction ID" value="UER00711"/>
</dbReference>
<dbReference type="Proteomes" id="UP000009073">
    <property type="component" value="Chromosome"/>
</dbReference>
<dbReference type="GO" id="GO:0009317">
    <property type="term" value="C:acetyl-CoA carboxylase complex"/>
    <property type="evidence" value="ECO:0007669"/>
    <property type="project" value="InterPro"/>
</dbReference>
<dbReference type="GO" id="GO:0003989">
    <property type="term" value="F:acetyl-CoA carboxylase activity"/>
    <property type="evidence" value="ECO:0007669"/>
    <property type="project" value="InterPro"/>
</dbReference>
<dbReference type="GO" id="GO:0005524">
    <property type="term" value="F:ATP binding"/>
    <property type="evidence" value="ECO:0007669"/>
    <property type="project" value="UniProtKB-KW"/>
</dbReference>
<dbReference type="GO" id="GO:0016743">
    <property type="term" value="F:carboxyl- or carbamoyltransferase activity"/>
    <property type="evidence" value="ECO:0007669"/>
    <property type="project" value="UniProtKB-UniRule"/>
</dbReference>
<dbReference type="GO" id="GO:0006633">
    <property type="term" value="P:fatty acid biosynthetic process"/>
    <property type="evidence" value="ECO:0007669"/>
    <property type="project" value="UniProtKB-KW"/>
</dbReference>
<dbReference type="GO" id="GO:2001295">
    <property type="term" value="P:malonyl-CoA biosynthetic process"/>
    <property type="evidence" value="ECO:0007669"/>
    <property type="project" value="UniProtKB-UniRule"/>
</dbReference>
<dbReference type="FunFam" id="3.90.226.10:FF:000008">
    <property type="entry name" value="Acetyl-coenzyme A carboxylase carboxyl transferase subunit alpha"/>
    <property type="match status" value="1"/>
</dbReference>
<dbReference type="Gene3D" id="3.90.226.10">
    <property type="entry name" value="2-enoyl-CoA Hydratase, Chain A, domain 1"/>
    <property type="match status" value="1"/>
</dbReference>
<dbReference type="HAMAP" id="MF_00823">
    <property type="entry name" value="AcetylCoA_CT_alpha"/>
    <property type="match status" value="1"/>
</dbReference>
<dbReference type="InterPro" id="IPR001095">
    <property type="entry name" value="Acetyl_CoA_COase_a_su"/>
</dbReference>
<dbReference type="InterPro" id="IPR029045">
    <property type="entry name" value="ClpP/crotonase-like_dom_sf"/>
</dbReference>
<dbReference type="InterPro" id="IPR011763">
    <property type="entry name" value="COA_CT_C"/>
</dbReference>
<dbReference type="NCBIfam" id="TIGR00513">
    <property type="entry name" value="accA"/>
    <property type="match status" value="1"/>
</dbReference>
<dbReference type="NCBIfam" id="NF041504">
    <property type="entry name" value="AccA_sub"/>
    <property type="match status" value="1"/>
</dbReference>
<dbReference type="NCBIfam" id="NF004344">
    <property type="entry name" value="PRK05724.1"/>
    <property type="match status" value="1"/>
</dbReference>
<dbReference type="PANTHER" id="PTHR42853">
    <property type="entry name" value="ACETYL-COENZYME A CARBOXYLASE CARBOXYL TRANSFERASE SUBUNIT ALPHA"/>
    <property type="match status" value="1"/>
</dbReference>
<dbReference type="PANTHER" id="PTHR42853:SF3">
    <property type="entry name" value="ACETYL-COENZYME A CARBOXYLASE CARBOXYL TRANSFERASE SUBUNIT ALPHA, CHLOROPLASTIC"/>
    <property type="match status" value="1"/>
</dbReference>
<dbReference type="Pfam" id="PF03255">
    <property type="entry name" value="ACCA"/>
    <property type="match status" value="1"/>
</dbReference>
<dbReference type="PRINTS" id="PR01069">
    <property type="entry name" value="ACCCTRFRASEA"/>
</dbReference>
<dbReference type="SUPFAM" id="SSF52096">
    <property type="entry name" value="ClpP/crotonase"/>
    <property type="match status" value="1"/>
</dbReference>
<dbReference type="PROSITE" id="PS50989">
    <property type="entry name" value="COA_CT_CTER"/>
    <property type="match status" value="1"/>
</dbReference>
<keyword id="KW-0067">ATP-binding</keyword>
<keyword id="KW-0963">Cytoplasm</keyword>
<keyword id="KW-0275">Fatty acid biosynthesis</keyword>
<keyword id="KW-0276">Fatty acid metabolism</keyword>
<keyword id="KW-0444">Lipid biosynthesis</keyword>
<keyword id="KW-0443">Lipid metabolism</keyword>
<keyword id="KW-0547">Nucleotide-binding</keyword>
<keyword id="KW-1185">Reference proteome</keyword>
<keyword id="KW-0808">Transferase</keyword>
<sequence length="318" mass="35429">MNMNFLEFEQPIAELLAQIEELKHVSEHVGSSVDLTDEIKHLEKKNEELTRKLFSDLGAWQISQLARHPQRPYTEDYIARMFTDFDEMAGDRAFADDKAIVGGTARLDGQPVMVIGHQKGRDTQEKIRRNFGMPRPEGYRKALRLMQMAERFKMPILTFIDTPGAYPGVGAEERGQSEAIARNLKVMSSLKVPVICTVIGEGGSGGALAIGVGDRVNMLQYSTYSVISPEGCASILWKSADKANVAAEAMGITAARLKELKLIDSIVPEPLGGAHRNVDEMANLLKQRILTDLNELNSLHTDELLRKRYQQLMSHGYC</sequence>
<feature type="chain" id="PRO_1000213133" description="Acetyl-coenzyme A carboxylase carboxyl transferase subunit alpha">
    <location>
        <begin position="1"/>
        <end position="318"/>
    </location>
</feature>
<feature type="domain" description="CoA carboxyltransferase C-terminal" evidence="2">
    <location>
        <begin position="41"/>
        <end position="295"/>
    </location>
</feature>
<organism>
    <name type="scientific">Tolumonas auensis (strain DSM 9187 / NBRC 110442 / TA 4)</name>
    <dbReference type="NCBI Taxonomy" id="595494"/>
    <lineage>
        <taxon>Bacteria</taxon>
        <taxon>Pseudomonadati</taxon>
        <taxon>Pseudomonadota</taxon>
        <taxon>Gammaproteobacteria</taxon>
        <taxon>Aeromonadales</taxon>
        <taxon>Aeromonadaceae</taxon>
        <taxon>Tolumonas</taxon>
    </lineage>
</organism>
<evidence type="ECO:0000255" key="1">
    <source>
        <dbReference type="HAMAP-Rule" id="MF_00823"/>
    </source>
</evidence>
<evidence type="ECO:0000255" key="2">
    <source>
        <dbReference type="PROSITE-ProRule" id="PRU01137"/>
    </source>
</evidence>
<name>ACCA_TOLAT</name>
<comment type="function">
    <text evidence="1">Component of the acetyl coenzyme A carboxylase (ACC) complex. First, biotin carboxylase catalyzes the carboxylation of biotin on its carrier protein (BCCP) and then the CO(2) group is transferred by the carboxyltransferase to acetyl-CoA to form malonyl-CoA.</text>
</comment>
<comment type="catalytic activity">
    <reaction evidence="1">
        <text>N(6)-carboxybiotinyl-L-lysyl-[protein] + acetyl-CoA = N(6)-biotinyl-L-lysyl-[protein] + malonyl-CoA</text>
        <dbReference type="Rhea" id="RHEA:54728"/>
        <dbReference type="Rhea" id="RHEA-COMP:10505"/>
        <dbReference type="Rhea" id="RHEA-COMP:10506"/>
        <dbReference type="ChEBI" id="CHEBI:57288"/>
        <dbReference type="ChEBI" id="CHEBI:57384"/>
        <dbReference type="ChEBI" id="CHEBI:83144"/>
        <dbReference type="ChEBI" id="CHEBI:83145"/>
        <dbReference type="EC" id="2.1.3.15"/>
    </reaction>
</comment>
<comment type="pathway">
    <text evidence="1">Lipid metabolism; malonyl-CoA biosynthesis; malonyl-CoA from acetyl-CoA: step 1/1.</text>
</comment>
<comment type="subunit">
    <text evidence="1">Acetyl-CoA carboxylase is a heterohexamer composed of biotin carboxyl carrier protein (AccB), biotin carboxylase (AccC) and two subunits each of ACCase subunit alpha (AccA) and ACCase subunit beta (AccD).</text>
</comment>
<comment type="subcellular location">
    <subcellularLocation>
        <location evidence="1">Cytoplasm</location>
    </subcellularLocation>
</comment>
<comment type="similarity">
    <text evidence="1">Belongs to the AccA family.</text>
</comment>
<proteinExistence type="inferred from homology"/>
<accession>C4L848</accession>
<gene>
    <name evidence="1" type="primary">accA</name>
    <name type="ordered locus">Tola_2095</name>
</gene>
<reference key="1">
    <citation type="submission" date="2009-05" db="EMBL/GenBank/DDBJ databases">
        <title>Complete sequence of Tolumonas auensis DSM 9187.</title>
        <authorList>
            <consortium name="US DOE Joint Genome Institute"/>
            <person name="Lucas S."/>
            <person name="Copeland A."/>
            <person name="Lapidus A."/>
            <person name="Glavina del Rio T."/>
            <person name="Tice H."/>
            <person name="Bruce D."/>
            <person name="Goodwin L."/>
            <person name="Pitluck S."/>
            <person name="Chertkov O."/>
            <person name="Brettin T."/>
            <person name="Detter J.C."/>
            <person name="Han C."/>
            <person name="Larimer F."/>
            <person name="Land M."/>
            <person name="Hauser L."/>
            <person name="Kyrpides N."/>
            <person name="Mikhailova N."/>
            <person name="Spring S."/>
            <person name="Beller H."/>
        </authorList>
    </citation>
    <scope>NUCLEOTIDE SEQUENCE [LARGE SCALE GENOMIC DNA]</scope>
    <source>
        <strain>DSM 9187 / NBRC 110442 / TA 4</strain>
    </source>
</reference>
<protein>
    <recommendedName>
        <fullName evidence="1">Acetyl-coenzyme A carboxylase carboxyl transferase subunit alpha</fullName>
        <shortName evidence="1">ACCase subunit alpha</shortName>
        <shortName evidence="1">Acetyl-CoA carboxylase carboxyltransferase subunit alpha</shortName>
        <ecNumber evidence="1">2.1.3.15</ecNumber>
    </recommendedName>
</protein>